<gene>
    <name type="primary">Cdc25a</name>
</gene>
<proteinExistence type="evidence at protein level"/>
<accession>P48965</accession>
<sequence>MELGPEPPHRRRLLFTCSPTPAPQPTGKVQFGASRAGGLSPVTNLTVTMDQLEGLGSDYEKPMDVRNSSSLQRMGSSESTDSGFCLDSPGPLDSKENLEISLRRINCLPQKLLGCSPALKRSHSDSLDHDIFQLIDQDENKENEAFEFKKPIRPASRGCLNAHVHEESKDPFTHRQNSAPARMLSSNESDISESGNFSPLFTPQSPVKASLSDEDDGFIDLLDGENLKNDEETPSCMSSLWTAPLVMRRPTNLADRCGLFDSPSPCSSTSSCSTRAVKRADRSHEESPRGTKRRKSSEASPVKADVPEPTQLPHQSLSLTSFPKGTIENIFHSDPRDLIGDFSKGYLFHTVSGKHQDLKYISPEIMASVLNGKFANLIKEFVIIDCRYPYEYEGGHIKGAVNLHMEEEVEEFLLKKPIVPADGKRVIVVFHCEFSSERGPRMCRYVRERDRLGNEYPKLHYPELYVLKGGYKEFFLKCQSHCEPPSYRPMHHEDFKEDLKKFRTKSRTWAGEKSKREMYSRLKKL</sequence>
<name>MPIP1_RAT</name>
<comment type="function">
    <text evidence="1 4">Tyrosine protein phosphatase which functions as a dosage-dependent inducer of mitotic progression (PubMed:10373478). Directly dephosphorylates CDK1 and stimulates its kinase activity (PubMed:10373478). Also dephosphorylates CDK2 in complex with cyclin-E, in vitro (By similarity).</text>
</comment>
<comment type="catalytic activity">
    <reaction evidence="4">
        <text>O-phospho-L-tyrosyl-[protein] + H2O = L-tyrosyl-[protein] + phosphate</text>
        <dbReference type="Rhea" id="RHEA:10684"/>
        <dbReference type="Rhea" id="RHEA-COMP:10136"/>
        <dbReference type="Rhea" id="RHEA-COMP:20101"/>
        <dbReference type="ChEBI" id="CHEBI:15377"/>
        <dbReference type="ChEBI" id="CHEBI:43474"/>
        <dbReference type="ChEBI" id="CHEBI:46858"/>
        <dbReference type="ChEBI" id="CHEBI:61978"/>
        <dbReference type="EC" id="3.1.3.48"/>
    </reaction>
    <physiologicalReaction direction="left-to-right" evidence="4">
        <dbReference type="Rhea" id="RHEA:10685"/>
    </physiologicalReaction>
</comment>
<comment type="activity regulation">
    <text evidence="1 4">Stimulated by B-type cyclins (By similarity). Stimulated by PIM1-mediated phosphorylation (PubMed:10373478).</text>
</comment>
<comment type="subunit">
    <text evidence="1">Interacts with CCNB1/cyclin B1. Interacts with YWHAE/14-3-3 epsilon when phosphorylated. Interacts with CUL1 specifically when CUL1 is neddylated and active. Interacts with BTRC/BTRCP1 and FBXW11/BTRCP2. Interactions with CUL1, BTRC and FBXW11 are enhanced upon DNA damage. Interacts with CHEK2; mediates CDC25A phosphorylation and degradation in response to infrared-induced DNA damages (By similarity). Interacts with HSP90AB1; prevents heat shock-mediated CDC25A degradation and contributes to cell cycle progression (By similarity).</text>
</comment>
<comment type="domain">
    <text evidence="1">The phosphodegron motif mediates interaction with specific F-box proteins when phosphorylated. Putative phosphorylation sites at Ser-79 and Ser-82 appear to be essential for this interaction (By similarity).</text>
</comment>
<comment type="PTM">
    <text evidence="1 4">Phosphorylated by CHEK1 on Ser-76, Ser-124, Ser-178, Ser-283, Ser-296 and Thr-508 during checkpoint mediated cell cycle arrest (By similarity). Also phosphorylated by CHEK2 on Ser-124, Ser-283, and Ser-296 during checkpoint mediated cell cycle arrest (By similarity). Phosphorylation on Ser-178 and Thr-508 creates binding sites for YWHAE/14-3-3 epsilon which inhibits CDC25A (By similarity). Phosphorylation on Ser-76, Ser-124, Ser-178, Ser-283 and Ser-296 may also promote ubiquitin-dependent proteolysis of CDC25A by the SCF complex (By similarity). Phosphorylation of CDC25A at Ser-76 by CHEK1 primes it for subsequent phosphorylation at Ser-79, Ser-82 and Ser-88 by NEK11 (By similarity). Phosphorylation by NEK11 is required for BTRC-mediated polyubiquitination and degradation (By similarity). Phosphorylation by PIM1 leads to an increase in phosphatase activity (PubMed:10373478). Phosphorylated by PLK3 following DNA damage, leading to promote its ubiquitination and degradation (By similarity).</text>
</comment>
<comment type="PTM">
    <text evidence="1">Ubiquitinated by the anaphase promoting complex/cyclosome (APC/C) ubiquitin ligase complex that contains FZR1/CDH1 during G1 phase leading to its degradation by the proteasome. Ubiquitinated by a SCF complex containing BTRC and FBXW11 during S phase leading to its degradation by the proteasome. Deubiquitination by USP17L2/DUB3 leads to its stabilization (By similarity).</text>
</comment>
<comment type="similarity">
    <text evidence="5">Belongs to the MPI phosphatase family.</text>
</comment>
<keyword id="KW-0131">Cell cycle</keyword>
<keyword id="KW-0132">Cell division</keyword>
<keyword id="KW-0378">Hydrolase</keyword>
<keyword id="KW-0498">Mitosis</keyword>
<keyword id="KW-0597">Phosphoprotein</keyword>
<keyword id="KW-0904">Protein phosphatase</keyword>
<keyword id="KW-1185">Reference proteome</keyword>
<keyword id="KW-0832">Ubl conjugation</keyword>
<reference key="1">
    <citation type="journal article" date="1994" name="EMBO J.">
        <title>Cdc25A is a novel phosphatase functioning early in the cell cycle.</title>
        <authorList>
            <person name="Jinno S."/>
            <person name="Suto K."/>
            <person name="Nagata A."/>
            <person name="Igarashi M."/>
            <person name="Kanaoka Y."/>
            <person name="Nojima H."/>
            <person name="Okayama H."/>
        </authorList>
    </citation>
    <scope>NUCLEOTIDE SEQUENCE [MRNA]</scope>
    <source>
        <strain>NRK49F</strain>
    </source>
</reference>
<reference key="2">
    <citation type="journal article" date="1999" name="J. Biol. Chem.">
        <title>Physical and functional interactions between Pim-1 kinase and Cdc25A phosphatase. Implications for the Pim-1-mediated activation of the c-Myc signaling pathway.</title>
        <authorList>
            <person name="Mochizuki T."/>
            <person name="Kitanaka C."/>
            <person name="Noguchi K."/>
            <person name="Muramatsu T."/>
            <person name="Asai A."/>
            <person name="Kuchino Y."/>
        </authorList>
    </citation>
    <scope>FUNCTION</scope>
    <scope>CATALYTIC ACTIVITY</scope>
    <scope>ACTIVITY REGULATION</scope>
    <scope>PHOSPHORYLATION</scope>
</reference>
<protein>
    <recommendedName>
        <fullName>M-phase inducer phosphatase 1</fullName>
        <ecNumber evidence="4">3.1.3.48</ecNumber>
    </recommendedName>
    <alternativeName>
        <fullName>Dual specificity phosphatase Cdc25A</fullName>
    </alternativeName>
</protein>
<organism>
    <name type="scientific">Rattus norvegicus</name>
    <name type="common">Rat</name>
    <dbReference type="NCBI Taxonomy" id="10116"/>
    <lineage>
        <taxon>Eukaryota</taxon>
        <taxon>Metazoa</taxon>
        <taxon>Chordata</taxon>
        <taxon>Craniata</taxon>
        <taxon>Vertebrata</taxon>
        <taxon>Euteleostomi</taxon>
        <taxon>Mammalia</taxon>
        <taxon>Eutheria</taxon>
        <taxon>Euarchontoglires</taxon>
        <taxon>Glires</taxon>
        <taxon>Rodentia</taxon>
        <taxon>Myomorpha</taxon>
        <taxon>Muroidea</taxon>
        <taxon>Muridae</taxon>
        <taxon>Murinae</taxon>
        <taxon>Rattus</taxon>
    </lineage>
</organism>
<evidence type="ECO:0000250" key="1">
    <source>
        <dbReference type="UniProtKB" id="P30304"/>
    </source>
</evidence>
<evidence type="ECO:0000255" key="2">
    <source>
        <dbReference type="PROSITE-ProRule" id="PRU00173"/>
    </source>
</evidence>
<evidence type="ECO:0000256" key="3">
    <source>
        <dbReference type="SAM" id="MobiDB-lite"/>
    </source>
</evidence>
<evidence type="ECO:0000269" key="4">
    <source>
    </source>
</evidence>
<evidence type="ECO:0000305" key="5"/>
<feature type="chain" id="PRO_0000198643" description="M-phase inducer phosphatase 1">
    <location>
        <begin position="1"/>
        <end position="525"/>
    </location>
</feature>
<feature type="domain" description="Rhodanese" evidence="2">
    <location>
        <begin position="377"/>
        <end position="483"/>
    </location>
</feature>
<feature type="region of interest" description="Disordered" evidence="3">
    <location>
        <begin position="1"/>
        <end position="42"/>
    </location>
</feature>
<feature type="region of interest" description="Disordered" evidence="3">
    <location>
        <begin position="260"/>
        <end position="318"/>
    </location>
</feature>
<feature type="short sequence motif" description="Phosphodegron">
    <location>
        <begin position="74"/>
        <end position="84"/>
    </location>
</feature>
<feature type="short sequence motif" description="KEN box">
    <location>
        <begin position="141"/>
        <end position="143"/>
    </location>
</feature>
<feature type="compositionally biased region" description="Low complexity" evidence="3">
    <location>
        <begin position="262"/>
        <end position="274"/>
    </location>
</feature>
<feature type="compositionally biased region" description="Basic and acidic residues" evidence="3">
    <location>
        <begin position="278"/>
        <end position="289"/>
    </location>
</feature>
<feature type="active site" evidence="1">
    <location>
        <position position="432"/>
    </location>
</feature>
<feature type="modified residue" description="Phosphoserine; by CHEK1" evidence="1">
    <location>
        <position position="76"/>
    </location>
</feature>
<feature type="modified residue" description="Phosphoserine; by NEK11" evidence="1">
    <location>
        <position position="79"/>
    </location>
</feature>
<feature type="modified residue" description="Phosphoserine; by NEK11" evidence="1">
    <location>
        <position position="82"/>
    </location>
</feature>
<feature type="modified residue" description="Phosphoserine; by NEK11" evidence="1">
    <location>
        <position position="88"/>
    </location>
</feature>
<feature type="modified residue" description="Phosphoserine; by CHEK1 and CHEK2" evidence="1">
    <location>
        <position position="124"/>
    </location>
</feature>
<feature type="modified residue" description="Phosphoserine; by CHEK1" evidence="1">
    <location>
        <position position="178"/>
    </location>
</feature>
<feature type="modified residue" description="Phosphoserine; by CHEK1 and CHEK2" evidence="1">
    <location>
        <position position="283"/>
    </location>
</feature>
<feature type="modified residue" description="Phosphoserine; by CHEK1 and CHEK2" evidence="1">
    <location>
        <position position="296"/>
    </location>
</feature>
<feature type="modified residue" description="Phosphothreonine; by CHEK1" evidence="1">
    <location>
        <position position="508"/>
    </location>
</feature>
<feature type="modified residue" description="Phosphoserine; by PLK3" evidence="1">
    <location>
        <position position="514"/>
    </location>
</feature>
<feature type="modified residue" description="Phosphoserine; by PLK3" evidence="1">
    <location>
        <position position="520"/>
    </location>
</feature>
<dbReference type="EC" id="3.1.3.48" evidence="4"/>
<dbReference type="EMBL" id="D16236">
    <property type="protein sequence ID" value="BAA03761.1"/>
    <property type="molecule type" value="mRNA"/>
</dbReference>
<dbReference type="RefSeq" id="NP_598255.1">
    <property type="nucleotide sequence ID" value="NM_133571.1"/>
</dbReference>
<dbReference type="SMR" id="P48965"/>
<dbReference type="BioGRID" id="251110">
    <property type="interactions" value="2"/>
</dbReference>
<dbReference type="FunCoup" id="P48965">
    <property type="interactions" value="1118"/>
</dbReference>
<dbReference type="STRING" id="10116.ENSRNOP00000028141"/>
<dbReference type="GlyGen" id="P48965">
    <property type="glycosylation" value="1 site"/>
</dbReference>
<dbReference type="iPTMnet" id="P48965"/>
<dbReference type="PhosphoSitePlus" id="P48965"/>
<dbReference type="PaxDb" id="10116-ENSRNOP00000028141"/>
<dbReference type="GeneID" id="171102"/>
<dbReference type="KEGG" id="rno:171102"/>
<dbReference type="UCSC" id="RGD:621498">
    <property type="organism name" value="rat"/>
</dbReference>
<dbReference type="AGR" id="RGD:621498"/>
<dbReference type="CTD" id="993"/>
<dbReference type="RGD" id="621498">
    <property type="gene designation" value="Cdc25a"/>
</dbReference>
<dbReference type="eggNOG" id="KOG3772">
    <property type="taxonomic scope" value="Eukaryota"/>
</dbReference>
<dbReference type="InParanoid" id="P48965"/>
<dbReference type="PhylomeDB" id="P48965"/>
<dbReference type="Reactome" id="R-RNO-176187">
    <property type="pathway name" value="Activation of ATR in response to replication stress"/>
</dbReference>
<dbReference type="Reactome" id="R-RNO-5689880">
    <property type="pathway name" value="Ub-specific processing proteases"/>
</dbReference>
<dbReference type="Reactome" id="R-RNO-69202">
    <property type="pathway name" value="Cyclin E associated events during G1/S transition"/>
</dbReference>
<dbReference type="Reactome" id="R-RNO-69273">
    <property type="pathway name" value="Cyclin A/B1/B2 associated events during G2/M transition"/>
</dbReference>
<dbReference type="Reactome" id="R-RNO-69601">
    <property type="pathway name" value="Ubiquitin Mediated Degradation of Phosphorylated Cdc25A"/>
</dbReference>
<dbReference type="Reactome" id="R-RNO-69656">
    <property type="pathway name" value="Cyclin A:Cdk2-associated events at S phase entry"/>
</dbReference>
<dbReference type="PRO" id="PR:P48965"/>
<dbReference type="Proteomes" id="UP000002494">
    <property type="component" value="Unplaced"/>
</dbReference>
<dbReference type="GO" id="GO:0005737">
    <property type="term" value="C:cytoplasm"/>
    <property type="evidence" value="ECO:0000266"/>
    <property type="project" value="RGD"/>
</dbReference>
<dbReference type="GO" id="GO:0005634">
    <property type="term" value="C:nucleus"/>
    <property type="evidence" value="ECO:0000266"/>
    <property type="project" value="RGD"/>
</dbReference>
<dbReference type="GO" id="GO:0004721">
    <property type="term" value="F:phosphoprotein phosphatase activity"/>
    <property type="evidence" value="ECO:0000314"/>
    <property type="project" value="RGD"/>
</dbReference>
<dbReference type="GO" id="GO:0019901">
    <property type="term" value="F:protein kinase binding"/>
    <property type="evidence" value="ECO:0000266"/>
    <property type="project" value="RGD"/>
</dbReference>
<dbReference type="GO" id="GO:0004725">
    <property type="term" value="F:protein tyrosine phosphatase activity"/>
    <property type="evidence" value="ECO:0000266"/>
    <property type="project" value="RGD"/>
</dbReference>
<dbReference type="GO" id="GO:0051087">
    <property type="term" value="F:protein-folding chaperone binding"/>
    <property type="evidence" value="ECO:0000266"/>
    <property type="project" value="RGD"/>
</dbReference>
<dbReference type="GO" id="GO:0051301">
    <property type="term" value="P:cell division"/>
    <property type="evidence" value="ECO:0007669"/>
    <property type="project" value="UniProtKB-KW"/>
</dbReference>
<dbReference type="GO" id="GO:0000082">
    <property type="term" value="P:G1/S transition of mitotic cell cycle"/>
    <property type="evidence" value="ECO:0000315"/>
    <property type="project" value="RGD"/>
</dbReference>
<dbReference type="GO" id="GO:0000086">
    <property type="term" value="P:G2/M transition of mitotic cell cycle"/>
    <property type="evidence" value="ECO:0000266"/>
    <property type="project" value="RGD"/>
</dbReference>
<dbReference type="GO" id="GO:1904056">
    <property type="term" value="P:positive regulation of cholangiocyte proliferation"/>
    <property type="evidence" value="ECO:0000315"/>
    <property type="project" value="RGD"/>
</dbReference>
<dbReference type="GO" id="GO:0010971">
    <property type="term" value="P:positive regulation of G2/M transition of mitotic cell cycle"/>
    <property type="evidence" value="ECO:0000250"/>
    <property type="project" value="UniProtKB"/>
</dbReference>
<dbReference type="GO" id="GO:0110032">
    <property type="term" value="P:positive regulation of G2/MI transition of meiotic cell cycle"/>
    <property type="evidence" value="ECO:0000318"/>
    <property type="project" value="GO_Central"/>
</dbReference>
<dbReference type="GO" id="GO:0009314">
    <property type="term" value="P:response to radiation"/>
    <property type="evidence" value="ECO:0000250"/>
    <property type="project" value="UniProtKB"/>
</dbReference>
<dbReference type="CDD" id="cd01530">
    <property type="entry name" value="Cdc25"/>
    <property type="match status" value="1"/>
</dbReference>
<dbReference type="FunFam" id="3.40.250.10:FF:000004">
    <property type="entry name" value="M-phase inducer phosphatase 1 isoform X1"/>
    <property type="match status" value="1"/>
</dbReference>
<dbReference type="Gene3D" id="3.40.250.10">
    <property type="entry name" value="Rhodanese-like domain"/>
    <property type="match status" value="1"/>
</dbReference>
<dbReference type="InterPro" id="IPR000751">
    <property type="entry name" value="MPI_Phosphatase"/>
</dbReference>
<dbReference type="InterPro" id="IPR001763">
    <property type="entry name" value="Rhodanese-like_dom"/>
</dbReference>
<dbReference type="InterPro" id="IPR036873">
    <property type="entry name" value="Rhodanese-like_dom_sf"/>
</dbReference>
<dbReference type="PANTHER" id="PTHR10828:SF46">
    <property type="entry name" value="M-PHASE INDUCER PHOSPHATASE 1"/>
    <property type="match status" value="1"/>
</dbReference>
<dbReference type="PANTHER" id="PTHR10828">
    <property type="entry name" value="M-PHASE INDUCER PHOSPHATASE DUAL SPECIFICITY PHOSPHATASE CDC25"/>
    <property type="match status" value="1"/>
</dbReference>
<dbReference type="Pfam" id="PF06617">
    <property type="entry name" value="M-inducer_phosp"/>
    <property type="match status" value="1"/>
</dbReference>
<dbReference type="Pfam" id="PF00581">
    <property type="entry name" value="Rhodanese"/>
    <property type="match status" value="1"/>
</dbReference>
<dbReference type="PRINTS" id="PR00716">
    <property type="entry name" value="MPIPHPHTASE"/>
</dbReference>
<dbReference type="SMART" id="SM00450">
    <property type="entry name" value="RHOD"/>
    <property type="match status" value="1"/>
</dbReference>
<dbReference type="SUPFAM" id="SSF52821">
    <property type="entry name" value="Rhodanese/Cell cycle control phosphatase"/>
    <property type="match status" value="1"/>
</dbReference>
<dbReference type="PROSITE" id="PS50206">
    <property type="entry name" value="RHODANESE_3"/>
    <property type="match status" value="1"/>
</dbReference>